<protein>
    <recommendedName>
        <fullName>Translocon-associated protein subunit gamma</fullName>
        <shortName>TRAP-gamma</shortName>
    </recommendedName>
    <alternativeName>
        <fullName>Signal sequence receptor subunit gamma</fullName>
        <shortName>SSR-gamma</shortName>
    </alternativeName>
</protein>
<accession>Q3SZ87</accession>
<organism>
    <name type="scientific">Bos taurus</name>
    <name type="common">Bovine</name>
    <dbReference type="NCBI Taxonomy" id="9913"/>
    <lineage>
        <taxon>Eukaryota</taxon>
        <taxon>Metazoa</taxon>
        <taxon>Chordata</taxon>
        <taxon>Craniata</taxon>
        <taxon>Vertebrata</taxon>
        <taxon>Euteleostomi</taxon>
        <taxon>Mammalia</taxon>
        <taxon>Eutheria</taxon>
        <taxon>Laurasiatheria</taxon>
        <taxon>Artiodactyla</taxon>
        <taxon>Ruminantia</taxon>
        <taxon>Pecora</taxon>
        <taxon>Bovidae</taxon>
        <taxon>Bovinae</taxon>
        <taxon>Bos</taxon>
    </lineage>
</organism>
<proteinExistence type="evidence at transcript level"/>
<evidence type="ECO:0000250" key="1"/>
<evidence type="ECO:0000250" key="2">
    <source>
        <dbReference type="UniProtKB" id="Q9DCF9"/>
    </source>
</evidence>
<evidence type="ECO:0000250" key="3">
    <source>
        <dbReference type="UniProtKB" id="Q9UNL2"/>
    </source>
</evidence>
<evidence type="ECO:0000255" key="4"/>
<evidence type="ECO:0000305" key="5"/>
<comment type="function">
    <text evidence="1">TRAP proteins are part of a complex whose function is to bind calcium to the ER membrane and thereby regulate the retention of ER resident proteins.</text>
</comment>
<comment type="subunit">
    <text evidence="1">Heterotetramer of TRAP-alpha, TRAP-beta, TRAP-delta and TRAP-gamma.</text>
</comment>
<comment type="subcellular location">
    <subcellularLocation>
        <location evidence="1">Endoplasmic reticulum membrane</location>
        <topology evidence="1">Multi-pass membrane protein</topology>
    </subcellularLocation>
</comment>
<comment type="similarity">
    <text evidence="5">Belongs to the TRAP-gamma family.</text>
</comment>
<feature type="chain" id="PRO_0000284958" description="Translocon-associated protein subunit gamma">
    <location>
        <begin position="1"/>
        <end position="185"/>
    </location>
</feature>
<feature type="topological domain" description="Lumenal" evidence="4">
    <location>
        <begin position="1"/>
        <end position="27"/>
    </location>
</feature>
<feature type="transmembrane region" description="Helical" evidence="4">
    <location>
        <begin position="28"/>
        <end position="48"/>
    </location>
</feature>
<feature type="topological domain" description="Cytoplasmic" evidence="4">
    <location>
        <begin position="49"/>
        <end position="54"/>
    </location>
</feature>
<feature type="transmembrane region" description="Helical" evidence="4">
    <location>
        <begin position="55"/>
        <end position="76"/>
    </location>
</feature>
<feature type="topological domain" description="Lumenal" evidence="4">
    <location>
        <begin position="77"/>
        <end position="135"/>
    </location>
</feature>
<feature type="transmembrane region" description="Helical" evidence="4">
    <location>
        <begin position="136"/>
        <end position="157"/>
    </location>
</feature>
<feature type="topological domain" description="Cytoplasmic" evidence="4">
    <location>
        <begin position="158"/>
        <end position="163"/>
    </location>
</feature>
<feature type="transmembrane region" description="Helical" evidence="4">
    <location>
        <begin position="164"/>
        <end position="184"/>
    </location>
</feature>
<feature type="modified residue" description="N-acetylmethionine" evidence="3">
    <location>
        <position position="1"/>
    </location>
</feature>
<feature type="modified residue" description="Phosphoserine" evidence="3">
    <location>
        <position position="11"/>
    </location>
</feature>
<feature type="modified residue" description="Phosphoserine" evidence="2">
    <location>
        <position position="105"/>
    </location>
</feature>
<sequence>MAPKGGPKQQSEEDLLLQDFSRNLSAKSSALFFGNAFIVSAIPIWLYWRIWHMDLIQSAVLYSVMTLVSTYLVAFAYKNVKFVLKHKVAQKREDAVSKEVTRKLSEADNRKMSRKEKDERILWKKNEVADYEATTFSIFYNNTLFLVLVIVASFFILKNFNPTVNYILSISASSGLIALLSTGSK</sequence>
<dbReference type="EMBL" id="BC103053">
    <property type="protein sequence ID" value="AAI03054.1"/>
    <property type="molecule type" value="mRNA"/>
</dbReference>
<dbReference type="RefSeq" id="NP_001070512.1">
    <property type="nucleotide sequence ID" value="NM_001077044.2"/>
</dbReference>
<dbReference type="SMR" id="Q3SZ87"/>
<dbReference type="FunCoup" id="Q3SZ87">
    <property type="interactions" value="1818"/>
</dbReference>
<dbReference type="STRING" id="9913.ENSBTAP00000024583"/>
<dbReference type="PaxDb" id="9913-ENSBTAP00000024583"/>
<dbReference type="PeptideAtlas" id="Q3SZ87"/>
<dbReference type="Ensembl" id="ENSBTAT00000024583.5">
    <property type="protein sequence ID" value="ENSBTAP00000024583.3"/>
    <property type="gene ID" value="ENSBTAG00000018471.5"/>
</dbReference>
<dbReference type="GeneID" id="767980"/>
<dbReference type="KEGG" id="bta:767980"/>
<dbReference type="CTD" id="6747"/>
<dbReference type="VEuPathDB" id="HostDB:ENSBTAG00000018471"/>
<dbReference type="VGNC" id="VGNC:35321">
    <property type="gene designation" value="SSR3"/>
</dbReference>
<dbReference type="eggNOG" id="KOG4490">
    <property type="taxonomic scope" value="Eukaryota"/>
</dbReference>
<dbReference type="GeneTree" id="ENSGT00390000000970"/>
<dbReference type="HOGENOM" id="CLU_092935_0_0_1"/>
<dbReference type="InParanoid" id="Q3SZ87"/>
<dbReference type="OMA" id="PLWLFWR"/>
<dbReference type="OrthoDB" id="10059529at2759"/>
<dbReference type="TreeFam" id="TF314998"/>
<dbReference type="Proteomes" id="UP000009136">
    <property type="component" value="Chromosome 1"/>
</dbReference>
<dbReference type="Bgee" id="ENSBTAG00000018471">
    <property type="expression patterns" value="Expressed in myometrium and 109 other cell types or tissues"/>
</dbReference>
<dbReference type="GO" id="GO:0005783">
    <property type="term" value="C:endoplasmic reticulum"/>
    <property type="evidence" value="ECO:0000318"/>
    <property type="project" value="GO_Central"/>
</dbReference>
<dbReference type="GO" id="GO:0005789">
    <property type="term" value="C:endoplasmic reticulum membrane"/>
    <property type="evidence" value="ECO:0007669"/>
    <property type="project" value="UniProtKB-SubCell"/>
</dbReference>
<dbReference type="GO" id="GO:0006614">
    <property type="term" value="P:SRP-dependent cotranslational protein targeting to membrane"/>
    <property type="evidence" value="ECO:0007669"/>
    <property type="project" value="InterPro"/>
</dbReference>
<dbReference type="InterPro" id="IPR009779">
    <property type="entry name" value="SSR3"/>
</dbReference>
<dbReference type="PANTHER" id="PTHR13399:SF3">
    <property type="entry name" value="TRANSLOCON-ASSOCIATED PROTEIN SUBUNIT GAMMA"/>
    <property type="match status" value="1"/>
</dbReference>
<dbReference type="PANTHER" id="PTHR13399">
    <property type="entry name" value="TRANSLOCON-ASSOCIATED PROTEIN TRAP , GAMMA SUBUNIT"/>
    <property type="match status" value="1"/>
</dbReference>
<dbReference type="Pfam" id="PF07074">
    <property type="entry name" value="TRAP-gamma"/>
    <property type="match status" value="1"/>
</dbReference>
<gene>
    <name type="primary">SSR3</name>
</gene>
<keyword id="KW-0007">Acetylation</keyword>
<keyword id="KW-0256">Endoplasmic reticulum</keyword>
<keyword id="KW-0472">Membrane</keyword>
<keyword id="KW-0597">Phosphoprotein</keyword>
<keyword id="KW-1185">Reference proteome</keyword>
<keyword id="KW-0812">Transmembrane</keyword>
<keyword id="KW-1133">Transmembrane helix</keyword>
<name>SSRG_BOVIN</name>
<reference key="1">
    <citation type="submission" date="2005-08" db="EMBL/GenBank/DDBJ databases">
        <authorList>
            <consortium name="NIH - Mammalian Gene Collection (MGC) project"/>
        </authorList>
    </citation>
    <scope>NUCLEOTIDE SEQUENCE [LARGE SCALE MRNA]</scope>
    <source>
        <strain>Hereford</strain>
        <tissue>Heart ventricle</tissue>
    </source>
</reference>